<gene>
    <name evidence="1" type="primary">matK</name>
    <name type="synonym">ycf14</name>
</gene>
<reference key="1">
    <citation type="journal article" date="1986" name="Nature">
        <title>Chloroplast gene organization deduced from complete sequence of liverwort Marchantia polymorpha chloroplast DNA.</title>
        <authorList>
            <person name="Ohyama K."/>
            <person name="Fukuzawa H."/>
            <person name="Kohchi T."/>
            <person name="Shirai H."/>
            <person name="Sano T."/>
            <person name="Sano S."/>
            <person name="Umesono K."/>
            <person name="Shiki Y."/>
            <person name="Takeuchi M."/>
            <person name="Chang Z."/>
            <person name="Aota S."/>
            <person name="Inokuchi H."/>
            <person name="Ozeki H."/>
        </authorList>
    </citation>
    <scope>NUCLEOTIDE SEQUENCE [LARGE SCALE GENOMIC DNA]</scope>
</reference>
<reference key="2">
    <citation type="journal article" date="1988" name="J. Mol. Biol.">
        <title>Structure and organization of Marchantia polymorpha chloroplast genome. II. Gene organization of the large single copy region from rps'12 to atpB.</title>
        <authorList>
            <person name="Umesono K."/>
            <person name="Inokuchi H."/>
            <person name="Shiki Y."/>
            <person name="Takeuchi M."/>
            <person name="Chang Z."/>
            <person name="Fukuzawa H."/>
            <person name="Kohchi T."/>
            <person name="Shirai H."/>
            <person name="Ohyama K."/>
            <person name="Ozeki H."/>
        </authorList>
    </citation>
    <scope>NUCLEOTIDE SEQUENCE [GENOMIC DNA]</scope>
</reference>
<comment type="function">
    <text evidence="1">Usually encoded in the trnK tRNA gene intron. Probably assists in splicing its own and other chloroplast group II introns.</text>
</comment>
<comment type="subcellular location">
    <subcellularLocation>
        <location>Plastid</location>
        <location>Chloroplast</location>
    </subcellularLocation>
</comment>
<comment type="similarity">
    <text evidence="1">Belongs to the intron maturase 2 family. MatK subfamily.</text>
</comment>
<sequence>MEHRIYNSNYFLDITIPYFFHPEILIRIFRRHIQDIPFLHFLRTLLYKNKCLNILNIENFFYLKKNQFFCFLWNFYIYEFEYLLNDIWEKFYKFESVFFWNFIDKTNSIKKIKHILKKSKKPIEKKIVKKISSIHYIRYKNNLIITLNDRNILILENWKDFFLIFWQKYFNVWFKSSRILIQNFYKNSFSFLGYMFRIESQIILIQIQIINLLRNVNLIKKEFCSIIPVIPLIRLLAKEKFCDVLGRPLCKLSWTTLSDNEIFERFDQIIKHIFSYYSGCINKKGLYQLQYIFRFSCAKTLACKHKSTIRTVWKKYGSNLLTSSIFFNKTKLISLNFSNKNPYKKNFWYLNIIQVNYLAHSLQKSKLLKE</sequence>
<accession>P12174</accession>
<protein>
    <recommendedName>
        <fullName evidence="1">Maturase K</fullName>
    </recommendedName>
    <alternativeName>
        <fullName evidence="1">Intron maturase</fullName>
    </alternativeName>
</protein>
<name>MATK_MARPO</name>
<geneLocation type="chloroplast"/>
<evidence type="ECO:0000255" key="1">
    <source>
        <dbReference type="HAMAP-Rule" id="MF_01390"/>
    </source>
</evidence>
<dbReference type="EMBL" id="X04465">
    <property type="protein sequence ID" value="CAA28076.1"/>
    <property type="molecule type" value="Genomic_DNA"/>
</dbReference>
<dbReference type="PIR" id="S01589">
    <property type="entry name" value="A05034"/>
</dbReference>
<dbReference type="RefSeq" id="NP_039290.1">
    <property type="nucleotide sequence ID" value="NC_001319.1"/>
</dbReference>
<dbReference type="GO" id="GO:0009507">
    <property type="term" value="C:chloroplast"/>
    <property type="evidence" value="ECO:0007669"/>
    <property type="project" value="UniProtKB-SubCell"/>
</dbReference>
<dbReference type="GO" id="GO:0003723">
    <property type="term" value="F:RNA binding"/>
    <property type="evidence" value="ECO:0007669"/>
    <property type="project" value="UniProtKB-KW"/>
</dbReference>
<dbReference type="GO" id="GO:0006397">
    <property type="term" value="P:mRNA processing"/>
    <property type="evidence" value="ECO:0007669"/>
    <property type="project" value="UniProtKB-KW"/>
</dbReference>
<dbReference type="GO" id="GO:0008380">
    <property type="term" value="P:RNA splicing"/>
    <property type="evidence" value="ECO:0007669"/>
    <property type="project" value="UniProtKB-UniRule"/>
</dbReference>
<dbReference type="GO" id="GO:0008033">
    <property type="term" value="P:tRNA processing"/>
    <property type="evidence" value="ECO:0007669"/>
    <property type="project" value="UniProtKB-KW"/>
</dbReference>
<dbReference type="HAMAP" id="MF_01390">
    <property type="entry name" value="MatK"/>
    <property type="match status" value="1"/>
</dbReference>
<dbReference type="InterPro" id="IPR024937">
    <property type="entry name" value="Domain_X"/>
</dbReference>
<dbReference type="InterPro" id="IPR002866">
    <property type="entry name" value="Maturase_MatK"/>
</dbReference>
<dbReference type="InterPro" id="IPR024942">
    <property type="entry name" value="Maturase_MatK_N"/>
</dbReference>
<dbReference type="PANTHER" id="PTHR34811">
    <property type="entry name" value="MATURASE K"/>
    <property type="match status" value="1"/>
</dbReference>
<dbReference type="PANTHER" id="PTHR34811:SF1">
    <property type="entry name" value="MATURASE K"/>
    <property type="match status" value="1"/>
</dbReference>
<dbReference type="Pfam" id="PF01348">
    <property type="entry name" value="Intron_maturas2"/>
    <property type="match status" value="1"/>
</dbReference>
<dbReference type="Pfam" id="PF01824">
    <property type="entry name" value="MatK_N"/>
    <property type="match status" value="1"/>
</dbReference>
<keyword id="KW-0150">Chloroplast</keyword>
<keyword id="KW-0507">mRNA processing</keyword>
<keyword id="KW-0934">Plastid</keyword>
<keyword id="KW-0694">RNA-binding</keyword>
<keyword id="KW-0819">tRNA processing</keyword>
<proteinExistence type="inferred from homology"/>
<organism>
    <name type="scientific">Marchantia polymorpha</name>
    <name type="common">Common liverwort</name>
    <name type="synonym">Marchantia aquatica</name>
    <dbReference type="NCBI Taxonomy" id="3197"/>
    <lineage>
        <taxon>Eukaryota</taxon>
        <taxon>Viridiplantae</taxon>
        <taxon>Streptophyta</taxon>
        <taxon>Embryophyta</taxon>
        <taxon>Marchantiophyta</taxon>
        <taxon>Marchantiopsida</taxon>
        <taxon>Marchantiidae</taxon>
        <taxon>Marchantiales</taxon>
        <taxon>Marchantiaceae</taxon>
        <taxon>Marchantia</taxon>
    </lineage>
</organism>
<feature type="chain" id="PRO_0000143508" description="Maturase K">
    <location>
        <begin position="1"/>
        <end position="370"/>
    </location>
</feature>